<gene>
    <name evidence="1" type="primary">recF</name>
    <name type="ordered locus">Asuc_0003</name>
</gene>
<sequence>MAISRLIIENFRNLAAVDLEFDHGFNFLVGNNGSGKTSLLESIFYLGHGRSFKSSVSTRIITYDKPYFTLHGRIWEQQHEWSVGLQKQRKEGLTLVKINGEDGNKISDLAHLLPMQMITPEGLTLLNGGPSYRRAFLDWGLFHHRPNFHSAWSALNRLLKQRNAALQQTYDYTDLQVWDVELSKLAHQVSLWRTDYAEALRPEIEQTCRLFLPELDIQVSFHQGWDKNTDYGDLLRENFARDKHIGYTVSGPQKADFRFKANGFPVEDVLSRGQLKLLMCALRLAQGEHLMVQKNRSCIFLIDDFASELDETKRGLLAERLRQSHSQVFVTAITAEQLKQMQPENHRTFSVNNGMISL</sequence>
<reference key="1">
    <citation type="journal article" date="2010" name="BMC Genomics">
        <title>A genomic perspective on the potential of Actinobacillus succinogenes for industrial succinate production.</title>
        <authorList>
            <person name="McKinlay J.B."/>
            <person name="Laivenieks M."/>
            <person name="Schindler B.D."/>
            <person name="McKinlay A.A."/>
            <person name="Siddaramappa S."/>
            <person name="Challacombe J.F."/>
            <person name="Lowry S.R."/>
            <person name="Clum A."/>
            <person name="Lapidus A.L."/>
            <person name="Burkhart K.B."/>
            <person name="Harkins V."/>
            <person name="Vieille C."/>
        </authorList>
    </citation>
    <scope>NUCLEOTIDE SEQUENCE [LARGE SCALE GENOMIC DNA]</scope>
    <source>
        <strain>ATCC 55618 / DSM 22257 / CCUG 43843 / 130Z</strain>
    </source>
</reference>
<name>RECF_ACTSZ</name>
<keyword id="KW-0067">ATP-binding</keyword>
<keyword id="KW-0963">Cytoplasm</keyword>
<keyword id="KW-0227">DNA damage</keyword>
<keyword id="KW-0234">DNA repair</keyword>
<keyword id="KW-0235">DNA replication</keyword>
<keyword id="KW-0238">DNA-binding</keyword>
<keyword id="KW-0547">Nucleotide-binding</keyword>
<keyword id="KW-1185">Reference proteome</keyword>
<keyword id="KW-0742">SOS response</keyword>
<accession>A6VK88</accession>
<protein>
    <recommendedName>
        <fullName evidence="1">DNA replication and repair protein RecF</fullName>
    </recommendedName>
</protein>
<comment type="function">
    <text evidence="1">The RecF protein is involved in DNA metabolism; it is required for DNA replication and normal SOS inducibility. RecF binds preferentially to single-stranded, linear DNA. It also seems to bind ATP.</text>
</comment>
<comment type="subcellular location">
    <subcellularLocation>
        <location evidence="1">Cytoplasm</location>
    </subcellularLocation>
</comment>
<comment type="similarity">
    <text evidence="1">Belongs to the RecF family.</text>
</comment>
<organism>
    <name type="scientific">Actinobacillus succinogenes (strain ATCC 55618 / DSM 22257 / CCUG 43843 / 130Z)</name>
    <dbReference type="NCBI Taxonomy" id="339671"/>
    <lineage>
        <taxon>Bacteria</taxon>
        <taxon>Pseudomonadati</taxon>
        <taxon>Pseudomonadota</taxon>
        <taxon>Gammaproteobacteria</taxon>
        <taxon>Pasteurellales</taxon>
        <taxon>Pasteurellaceae</taxon>
        <taxon>Actinobacillus</taxon>
    </lineage>
</organism>
<feature type="chain" id="PRO_1000072097" description="DNA replication and repair protein RecF">
    <location>
        <begin position="1"/>
        <end position="358"/>
    </location>
</feature>
<feature type="binding site" evidence="1">
    <location>
        <begin position="30"/>
        <end position="37"/>
    </location>
    <ligand>
        <name>ATP</name>
        <dbReference type="ChEBI" id="CHEBI:30616"/>
    </ligand>
</feature>
<proteinExistence type="inferred from homology"/>
<dbReference type="EMBL" id="CP000746">
    <property type="protein sequence ID" value="ABR73385.1"/>
    <property type="molecule type" value="Genomic_DNA"/>
</dbReference>
<dbReference type="RefSeq" id="WP_011978662.1">
    <property type="nucleotide sequence ID" value="NC_009655.1"/>
</dbReference>
<dbReference type="SMR" id="A6VK88"/>
<dbReference type="STRING" id="339671.Asuc_0003"/>
<dbReference type="KEGG" id="asu:Asuc_0003"/>
<dbReference type="eggNOG" id="COG1195">
    <property type="taxonomic scope" value="Bacteria"/>
</dbReference>
<dbReference type="HOGENOM" id="CLU_040267_0_0_6"/>
<dbReference type="OrthoDB" id="9803889at2"/>
<dbReference type="Proteomes" id="UP000001114">
    <property type="component" value="Chromosome"/>
</dbReference>
<dbReference type="GO" id="GO:0005737">
    <property type="term" value="C:cytoplasm"/>
    <property type="evidence" value="ECO:0007669"/>
    <property type="project" value="UniProtKB-SubCell"/>
</dbReference>
<dbReference type="GO" id="GO:0005524">
    <property type="term" value="F:ATP binding"/>
    <property type="evidence" value="ECO:0007669"/>
    <property type="project" value="UniProtKB-UniRule"/>
</dbReference>
<dbReference type="GO" id="GO:0003697">
    <property type="term" value="F:single-stranded DNA binding"/>
    <property type="evidence" value="ECO:0007669"/>
    <property type="project" value="UniProtKB-UniRule"/>
</dbReference>
<dbReference type="GO" id="GO:0006260">
    <property type="term" value="P:DNA replication"/>
    <property type="evidence" value="ECO:0007669"/>
    <property type="project" value="UniProtKB-UniRule"/>
</dbReference>
<dbReference type="GO" id="GO:0000731">
    <property type="term" value="P:DNA synthesis involved in DNA repair"/>
    <property type="evidence" value="ECO:0007669"/>
    <property type="project" value="TreeGrafter"/>
</dbReference>
<dbReference type="GO" id="GO:0006302">
    <property type="term" value="P:double-strand break repair"/>
    <property type="evidence" value="ECO:0007669"/>
    <property type="project" value="TreeGrafter"/>
</dbReference>
<dbReference type="GO" id="GO:0009432">
    <property type="term" value="P:SOS response"/>
    <property type="evidence" value="ECO:0007669"/>
    <property type="project" value="UniProtKB-UniRule"/>
</dbReference>
<dbReference type="FunFam" id="1.20.1050.90:FF:000001">
    <property type="entry name" value="DNA replication and repair protein RecF"/>
    <property type="match status" value="1"/>
</dbReference>
<dbReference type="Gene3D" id="3.40.50.300">
    <property type="entry name" value="P-loop containing nucleotide triphosphate hydrolases"/>
    <property type="match status" value="1"/>
</dbReference>
<dbReference type="Gene3D" id="1.20.1050.90">
    <property type="entry name" value="RecF/RecN/SMC, N-terminal domain"/>
    <property type="match status" value="1"/>
</dbReference>
<dbReference type="HAMAP" id="MF_00365">
    <property type="entry name" value="RecF"/>
    <property type="match status" value="1"/>
</dbReference>
<dbReference type="InterPro" id="IPR001238">
    <property type="entry name" value="DNA-binding_RecF"/>
</dbReference>
<dbReference type="InterPro" id="IPR018078">
    <property type="entry name" value="DNA-binding_RecF_CS"/>
</dbReference>
<dbReference type="InterPro" id="IPR027417">
    <property type="entry name" value="P-loop_NTPase"/>
</dbReference>
<dbReference type="InterPro" id="IPR003395">
    <property type="entry name" value="RecF/RecN/SMC_N"/>
</dbReference>
<dbReference type="InterPro" id="IPR042174">
    <property type="entry name" value="RecF_2"/>
</dbReference>
<dbReference type="NCBIfam" id="TIGR00611">
    <property type="entry name" value="recf"/>
    <property type="match status" value="1"/>
</dbReference>
<dbReference type="PANTHER" id="PTHR32182">
    <property type="entry name" value="DNA REPLICATION AND REPAIR PROTEIN RECF"/>
    <property type="match status" value="1"/>
</dbReference>
<dbReference type="PANTHER" id="PTHR32182:SF0">
    <property type="entry name" value="DNA REPLICATION AND REPAIR PROTEIN RECF"/>
    <property type="match status" value="1"/>
</dbReference>
<dbReference type="Pfam" id="PF02463">
    <property type="entry name" value="SMC_N"/>
    <property type="match status" value="1"/>
</dbReference>
<dbReference type="SUPFAM" id="SSF52540">
    <property type="entry name" value="P-loop containing nucleoside triphosphate hydrolases"/>
    <property type="match status" value="1"/>
</dbReference>
<dbReference type="PROSITE" id="PS00617">
    <property type="entry name" value="RECF_1"/>
    <property type="match status" value="1"/>
</dbReference>
<dbReference type="PROSITE" id="PS00618">
    <property type="entry name" value="RECF_2"/>
    <property type="match status" value="1"/>
</dbReference>
<evidence type="ECO:0000255" key="1">
    <source>
        <dbReference type="HAMAP-Rule" id="MF_00365"/>
    </source>
</evidence>